<evidence type="ECO:0000255" key="1">
    <source>
        <dbReference type="HAMAP-Rule" id="MF_01456"/>
    </source>
</evidence>
<proteinExistence type="inferred from homology"/>
<comment type="function">
    <text evidence="1">NDH-1 shuttles electrons from NADH, via FMN and iron-sulfur (Fe-S) centers, to quinones in the respiratory chain. The immediate electron acceptor for the enzyme in this species is believed to be ubiquinone. Couples the redox reaction to proton translocation (for every two electrons transferred, four hydrogen ions are translocated across the cytoplasmic membrane), and thus conserves the redox energy in a proton gradient.</text>
</comment>
<comment type="catalytic activity">
    <reaction evidence="1">
        <text>a quinone + NADH + 5 H(+)(in) = a quinol + NAD(+) + 4 H(+)(out)</text>
        <dbReference type="Rhea" id="RHEA:57888"/>
        <dbReference type="ChEBI" id="CHEBI:15378"/>
        <dbReference type="ChEBI" id="CHEBI:24646"/>
        <dbReference type="ChEBI" id="CHEBI:57540"/>
        <dbReference type="ChEBI" id="CHEBI:57945"/>
        <dbReference type="ChEBI" id="CHEBI:132124"/>
    </reaction>
</comment>
<comment type="subunit">
    <text evidence="1">NDH-1 is composed of 13 different subunits. Subunits NuoA, H, J, K, L, M, N constitute the membrane sector of the complex.</text>
</comment>
<comment type="subcellular location">
    <subcellularLocation>
        <location evidence="1">Cell inner membrane</location>
        <topology evidence="1">Multi-pass membrane protein</topology>
    </subcellularLocation>
</comment>
<comment type="similarity">
    <text evidence="1">Belongs to the complex I subunit 4L family.</text>
</comment>
<sequence length="100" mass="10902">MIPLQHGLLLAAILFVLGLTGLVIRRNLLFMLISLEIMINASALAFVVAGSYWGQSDGQVMYILAITLAAAEASIGLALLLQLYRRRQTLNIDTVSEMRG</sequence>
<protein>
    <recommendedName>
        <fullName evidence="1">NADH-quinone oxidoreductase subunit K</fullName>
        <ecNumber evidence="1">7.1.1.-</ecNumber>
    </recommendedName>
    <alternativeName>
        <fullName evidence="1">NADH dehydrogenase I subunit K</fullName>
    </alternativeName>
    <alternativeName>
        <fullName evidence="1">NDH-1 subunit K</fullName>
    </alternativeName>
</protein>
<accession>C6C9P6</accession>
<organism>
    <name type="scientific">Musicola paradisiaca (strain Ech703)</name>
    <name type="common">Dickeya paradisiaca</name>
    <name type="synonym">Dickeya dadantii</name>
    <dbReference type="NCBI Taxonomy" id="579405"/>
    <lineage>
        <taxon>Bacteria</taxon>
        <taxon>Pseudomonadati</taxon>
        <taxon>Pseudomonadota</taxon>
        <taxon>Gammaproteobacteria</taxon>
        <taxon>Enterobacterales</taxon>
        <taxon>Pectobacteriaceae</taxon>
        <taxon>Musicola</taxon>
    </lineage>
</organism>
<feature type="chain" id="PRO_0000390033" description="NADH-quinone oxidoreductase subunit K">
    <location>
        <begin position="1"/>
        <end position="100"/>
    </location>
</feature>
<feature type="transmembrane region" description="Helical" evidence="1">
    <location>
        <begin position="4"/>
        <end position="24"/>
    </location>
</feature>
<feature type="transmembrane region" description="Helical" evidence="1">
    <location>
        <begin position="28"/>
        <end position="48"/>
    </location>
</feature>
<feature type="transmembrane region" description="Helical" evidence="1">
    <location>
        <begin position="60"/>
        <end position="80"/>
    </location>
</feature>
<keyword id="KW-0997">Cell inner membrane</keyword>
<keyword id="KW-1003">Cell membrane</keyword>
<keyword id="KW-0472">Membrane</keyword>
<keyword id="KW-0520">NAD</keyword>
<keyword id="KW-0874">Quinone</keyword>
<keyword id="KW-1278">Translocase</keyword>
<keyword id="KW-0812">Transmembrane</keyword>
<keyword id="KW-1133">Transmembrane helix</keyword>
<keyword id="KW-0813">Transport</keyword>
<keyword id="KW-0830">Ubiquinone</keyword>
<dbReference type="EC" id="7.1.1.-" evidence="1"/>
<dbReference type="EMBL" id="CP001654">
    <property type="protein sequence ID" value="ACS86318.1"/>
    <property type="molecule type" value="Genomic_DNA"/>
</dbReference>
<dbReference type="RefSeq" id="WP_015854224.1">
    <property type="nucleotide sequence ID" value="NC_012880.1"/>
</dbReference>
<dbReference type="SMR" id="C6C9P6"/>
<dbReference type="STRING" id="579405.Dd703_2541"/>
<dbReference type="KEGG" id="dda:Dd703_2541"/>
<dbReference type="eggNOG" id="COG0713">
    <property type="taxonomic scope" value="Bacteria"/>
</dbReference>
<dbReference type="HOGENOM" id="CLU_144724_0_1_6"/>
<dbReference type="Proteomes" id="UP000002734">
    <property type="component" value="Chromosome"/>
</dbReference>
<dbReference type="GO" id="GO:0030964">
    <property type="term" value="C:NADH dehydrogenase complex"/>
    <property type="evidence" value="ECO:0007669"/>
    <property type="project" value="TreeGrafter"/>
</dbReference>
<dbReference type="GO" id="GO:0005886">
    <property type="term" value="C:plasma membrane"/>
    <property type="evidence" value="ECO:0007669"/>
    <property type="project" value="UniProtKB-SubCell"/>
</dbReference>
<dbReference type="GO" id="GO:0050136">
    <property type="term" value="F:NADH:ubiquinone reductase (non-electrogenic) activity"/>
    <property type="evidence" value="ECO:0007669"/>
    <property type="project" value="UniProtKB-UniRule"/>
</dbReference>
<dbReference type="GO" id="GO:0048038">
    <property type="term" value="F:quinone binding"/>
    <property type="evidence" value="ECO:0007669"/>
    <property type="project" value="UniProtKB-KW"/>
</dbReference>
<dbReference type="GO" id="GO:0042773">
    <property type="term" value="P:ATP synthesis coupled electron transport"/>
    <property type="evidence" value="ECO:0007669"/>
    <property type="project" value="InterPro"/>
</dbReference>
<dbReference type="FunFam" id="1.10.287.3510:FF:000001">
    <property type="entry name" value="NADH-quinone oxidoreductase subunit K"/>
    <property type="match status" value="1"/>
</dbReference>
<dbReference type="Gene3D" id="1.10.287.3510">
    <property type="match status" value="1"/>
</dbReference>
<dbReference type="HAMAP" id="MF_01456">
    <property type="entry name" value="NDH1_NuoK"/>
    <property type="match status" value="1"/>
</dbReference>
<dbReference type="InterPro" id="IPR001133">
    <property type="entry name" value="NADH_UbQ_OxRdtase_chain4L/K"/>
</dbReference>
<dbReference type="InterPro" id="IPR039428">
    <property type="entry name" value="NUOK/Mnh_C1-like"/>
</dbReference>
<dbReference type="NCBIfam" id="NF004319">
    <property type="entry name" value="PRK05715.1-1"/>
    <property type="match status" value="1"/>
</dbReference>
<dbReference type="NCBIfam" id="NF004320">
    <property type="entry name" value="PRK05715.1-2"/>
    <property type="match status" value="1"/>
</dbReference>
<dbReference type="PANTHER" id="PTHR11434:SF16">
    <property type="entry name" value="NADH-UBIQUINONE OXIDOREDUCTASE CHAIN 4L"/>
    <property type="match status" value="1"/>
</dbReference>
<dbReference type="PANTHER" id="PTHR11434">
    <property type="entry name" value="NADH-UBIQUINONE OXIDOREDUCTASE SUBUNIT ND4L"/>
    <property type="match status" value="1"/>
</dbReference>
<dbReference type="Pfam" id="PF00420">
    <property type="entry name" value="Oxidored_q2"/>
    <property type="match status" value="1"/>
</dbReference>
<name>NUOK_MUSP7</name>
<gene>
    <name evidence="1" type="primary">nuoK</name>
    <name type="ordered locus">Dd703_2541</name>
</gene>
<reference key="1">
    <citation type="submission" date="2009-06" db="EMBL/GenBank/DDBJ databases">
        <title>Complete sequence of Dickeya dadantii Ech703.</title>
        <authorList>
            <consortium name="US DOE Joint Genome Institute"/>
            <person name="Lucas S."/>
            <person name="Copeland A."/>
            <person name="Lapidus A."/>
            <person name="Glavina del Rio T."/>
            <person name="Dalin E."/>
            <person name="Tice H."/>
            <person name="Bruce D."/>
            <person name="Goodwin L."/>
            <person name="Pitluck S."/>
            <person name="Chertkov O."/>
            <person name="Brettin T."/>
            <person name="Detter J.C."/>
            <person name="Han C."/>
            <person name="Larimer F."/>
            <person name="Land M."/>
            <person name="Hauser L."/>
            <person name="Kyrpides N."/>
            <person name="Mikhailova N."/>
            <person name="Balakrishnan V."/>
            <person name="Glasner J."/>
            <person name="Perna N.T."/>
        </authorList>
    </citation>
    <scope>NUCLEOTIDE SEQUENCE [LARGE SCALE GENOMIC DNA]</scope>
    <source>
        <strain>Ech703</strain>
    </source>
</reference>